<gene>
    <name evidence="1" type="primary">purA</name>
    <name type="ordered locus">WS2056</name>
</gene>
<feature type="chain" id="PRO_0000095260" description="Adenylosuccinate synthetase">
    <location>
        <begin position="1"/>
        <end position="415"/>
    </location>
</feature>
<feature type="active site" description="Proton acceptor" evidence="1">
    <location>
        <position position="13"/>
    </location>
</feature>
<feature type="active site" description="Proton donor" evidence="1">
    <location>
        <position position="41"/>
    </location>
</feature>
<feature type="binding site" evidence="1">
    <location>
        <begin position="12"/>
        <end position="18"/>
    </location>
    <ligand>
        <name>GTP</name>
        <dbReference type="ChEBI" id="CHEBI:37565"/>
    </ligand>
</feature>
<feature type="binding site" description="in other chain" evidence="1">
    <location>
        <begin position="13"/>
        <end position="16"/>
    </location>
    <ligand>
        <name>IMP</name>
        <dbReference type="ChEBI" id="CHEBI:58053"/>
        <note>ligand shared between dimeric partners</note>
    </ligand>
</feature>
<feature type="binding site" evidence="1">
    <location>
        <position position="13"/>
    </location>
    <ligand>
        <name>Mg(2+)</name>
        <dbReference type="ChEBI" id="CHEBI:18420"/>
    </ligand>
</feature>
<feature type="binding site" description="in other chain" evidence="1">
    <location>
        <begin position="38"/>
        <end position="41"/>
    </location>
    <ligand>
        <name>IMP</name>
        <dbReference type="ChEBI" id="CHEBI:58053"/>
        <note>ligand shared between dimeric partners</note>
    </ligand>
</feature>
<feature type="binding site" evidence="1">
    <location>
        <begin position="40"/>
        <end position="42"/>
    </location>
    <ligand>
        <name>GTP</name>
        <dbReference type="ChEBI" id="CHEBI:37565"/>
    </ligand>
</feature>
<feature type="binding site" evidence="1">
    <location>
        <position position="40"/>
    </location>
    <ligand>
        <name>Mg(2+)</name>
        <dbReference type="ChEBI" id="CHEBI:18420"/>
    </ligand>
</feature>
<feature type="binding site" description="in other chain" evidence="1">
    <location>
        <position position="125"/>
    </location>
    <ligand>
        <name>IMP</name>
        <dbReference type="ChEBI" id="CHEBI:58053"/>
        <note>ligand shared between dimeric partners</note>
    </ligand>
</feature>
<feature type="binding site" evidence="1">
    <location>
        <position position="139"/>
    </location>
    <ligand>
        <name>IMP</name>
        <dbReference type="ChEBI" id="CHEBI:58053"/>
        <note>ligand shared between dimeric partners</note>
    </ligand>
</feature>
<feature type="binding site" description="in other chain" evidence="1">
    <location>
        <position position="219"/>
    </location>
    <ligand>
        <name>IMP</name>
        <dbReference type="ChEBI" id="CHEBI:58053"/>
        <note>ligand shared between dimeric partners</note>
    </ligand>
</feature>
<feature type="binding site" description="in other chain" evidence="1">
    <location>
        <position position="234"/>
    </location>
    <ligand>
        <name>IMP</name>
        <dbReference type="ChEBI" id="CHEBI:58053"/>
        <note>ligand shared between dimeric partners</note>
    </ligand>
</feature>
<feature type="binding site" evidence="1">
    <location>
        <begin position="294"/>
        <end position="300"/>
    </location>
    <ligand>
        <name>substrate</name>
    </ligand>
</feature>
<feature type="binding site" description="in other chain" evidence="1">
    <location>
        <position position="298"/>
    </location>
    <ligand>
        <name>IMP</name>
        <dbReference type="ChEBI" id="CHEBI:58053"/>
        <note>ligand shared between dimeric partners</note>
    </ligand>
</feature>
<feature type="binding site" evidence="1">
    <location>
        <position position="300"/>
    </location>
    <ligand>
        <name>GTP</name>
        <dbReference type="ChEBI" id="CHEBI:37565"/>
    </ligand>
</feature>
<feature type="binding site" evidence="1">
    <location>
        <begin position="326"/>
        <end position="328"/>
    </location>
    <ligand>
        <name>GTP</name>
        <dbReference type="ChEBI" id="CHEBI:37565"/>
    </ligand>
</feature>
<feature type="binding site" evidence="1">
    <location>
        <begin position="404"/>
        <end position="406"/>
    </location>
    <ligand>
        <name>GTP</name>
        <dbReference type="ChEBI" id="CHEBI:37565"/>
    </ligand>
</feature>
<protein>
    <recommendedName>
        <fullName evidence="1">Adenylosuccinate synthetase</fullName>
        <shortName evidence="1">AMPSase</shortName>
        <shortName evidence="1">AdSS</shortName>
        <ecNumber evidence="1">6.3.4.4</ecNumber>
    </recommendedName>
    <alternativeName>
        <fullName evidence="1">IMP--aspartate ligase</fullName>
    </alternativeName>
</protein>
<evidence type="ECO:0000255" key="1">
    <source>
        <dbReference type="HAMAP-Rule" id="MF_00011"/>
    </source>
</evidence>
<accession>Q7M7V8</accession>
<organism>
    <name type="scientific">Wolinella succinogenes (strain ATCC 29543 / DSM 1740 / CCUG 13145 / JCM 31913 / LMG 7466 / NCTC 11488 / FDC 602W)</name>
    <name type="common">Vibrio succinogenes</name>
    <dbReference type="NCBI Taxonomy" id="273121"/>
    <lineage>
        <taxon>Bacteria</taxon>
        <taxon>Pseudomonadati</taxon>
        <taxon>Campylobacterota</taxon>
        <taxon>Epsilonproteobacteria</taxon>
        <taxon>Campylobacterales</taxon>
        <taxon>Helicobacteraceae</taxon>
        <taxon>Wolinella</taxon>
    </lineage>
</organism>
<name>PURA_WOLSU</name>
<dbReference type="EC" id="6.3.4.4" evidence="1"/>
<dbReference type="EMBL" id="BX571662">
    <property type="protein sequence ID" value="CAE11056.1"/>
    <property type="molecule type" value="Genomic_DNA"/>
</dbReference>
<dbReference type="SMR" id="Q7M7V8"/>
<dbReference type="STRING" id="273121.WS2056"/>
<dbReference type="KEGG" id="wsu:WS2056"/>
<dbReference type="eggNOG" id="COG0104">
    <property type="taxonomic scope" value="Bacteria"/>
</dbReference>
<dbReference type="HOGENOM" id="CLU_029848_0_0_7"/>
<dbReference type="UniPathway" id="UPA00075">
    <property type="reaction ID" value="UER00335"/>
</dbReference>
<dbReference type="Proteomes" id="UP000000422">
    <property type="component" value="Chromosome"/>
</dbReference>
<dbReference type="GO" id="GO:0005737">
    <property type="term" value="C:cytoplasm"/>
    <property type="evidence" value="ECO:0007669"/>
    <property type="project" value="UniProtKB-SubCell"/>
</dbReference>
<dbReference type="GO" id="GO:0004019">
    <property type="term" value="F:adenylosuccinate synthase activity"/>
    <property type="evidence" value="ECO:0007669"/>
    <property type="project" value="UniProtKB-UniRule"/>
</dbReference>
<dbReference type="GO" id="GO:0005525">
    <property type="term" value="F:GTP binding"/>
    <property type="evidence" value="ECO:0007669"/>
    <property type="project" value="UniProtKB-UniRule"/>
</dbReference>
<dbReference type="GO" id="GO:0000287">
    <property type="term" value="F:magnesium ion binding"/>
    <property type="evidence" value="ECO:0007669"/>
    <property type="project" value="UniProtKB-UniRule"/>
</dbReference>
<dbReference type="GO" id="GO:0044208">
    <property type="term" value="P:'de novo' AMP biosynthetic process"/>
    <property type="evidence" value="ECO:0007669"/>
    <property type="project" value="UniProtKB-UniRule"/>
</dbReference>
<dbReference type="GO" id="GO:0046040">
    <property type="term" value="P:IMP metabolic process"/>
    <property type="evidence" value="ECO:0007669"/>
    <property type="project" value="TreeGrafter"/>
</dbReference>
<dbReference type="CDD" id="cd03108">
    <property type="entry name" value="AdSS"/>
    <property type="match status" value="1"/>
</dbReference>
<dbReference type="FunFam" id="1.10.300.10:FF:000001">
    <property type="entry name" value="Adenylosuccinate synthetase"/>
    <property type="match status" value="1"/>
</dbReference>
<dbReference type="FunFam" id="3.90.170.10:FF:000001">
    <property type="entry name" value="Adenylosuccinate synthetase"/>
    <property type="match status" value="1"/>
</dbReference>
<dbReference type="Gene3D" id="3.40.440.10">
    <property type="entry name" value="Adenylosuccinate Synthetase, subunit A, domain 1"/>
    <property type="match status" value="1"/>
</dbReference>
<dbReference type="Gene3D" id="1.10.300.10">
    <property type="entry name" value="Adenylosuccinate Synthetase, subunit A, domain 2"/>
    <property type="match status" value="1"/>
</dbReference>
<dbReference type="Gene3D" id="3.90.170.10">
    <property type="entry name" value="Adenylosuccinate Synthetase, subunit A, domain 3"/>
    <property type="match status" value="1"/>
</dbReference>
<dbReference type="HAMAP" id="MF_00011">
    <property type="entry name" value="Adenylosucc_synth"/>
    <property type="match status" value="1"/>
</dbReference>
<dbReference type="InterPro" id="IPR018220">
    <property type="entry name" value="Adenylosuccin_syn_GTP-bd"/>
</dbReference>
<dbReference type="InterPro" id="IPR033128">
    <property type="entry name" value="Adenylosuccin_syn_Lys_AS"/>
</dbReference>
<dbReference type="InterPro" id="IPR042109">
    <property type="entry name" value="Adenylosuccinate_synth_dom1"/>
</dbReference>
<dbReference type="InterPro" id="IPR042110">
    <property type="entry name" value="Adenylosuccinate_synth_dom2"/>
</dbReference>
<dbReference type="InterPro" id="IPR042111">
    <property type="entry name" value="Adenylosuccinate_synth_dom3"/>
</dbReference>
<dbReference type="InterPro" id="IPR001114">
    <property type="entry name" value="Adenylosuccinate_synthetase"/>
</dbReference>
<dbReference type="InterPro" id="IPR027417">
    <property type="entry name" value="P-loop_NTPase"/>
</dbReference>
<dbReference type="NCBIfam" id="NF002223">
    <property type="entry name" value="PRK01117.1"/>
    <property type="match status" value="1"/>
</dbReference>
<dbReference type="NCBIfam" id="TIGR00184">
    <property type="entry name" value="purA"/>
    <property type="match status" value="1"/>
</dbReference>
<dbReference type="PANTHER" id="PTHR11846">
    <property type="entry name" value="ADENYLOSUCCINATE SYNTHETASE"/>
    <property type="match status" value="1"/>
</dbReference>
<dbReference type="PANTHER" id="PTHR11846:SF0">
    <property type="entry name" value="ADENYLOSUCCINATE SYNTHETASE"/>
    <property type="match status" value="1"/>
</dbReference>
<dbReference type="Pfam" id="PF00709">
    <property type="entry name" value="Adenylsucc_synt"/>
    <property type="match status" value="1"/>
</dbReference>
<dbReference type="SMART" id="SM00788">
    <property type="entry name" value="Adenylsucc_synt"/>
    <property type="match status" value="1"/>
</dbReference>
<dbReference type="SUPFAM" id="SSF52540">
    <property type="entry name" value="P-loop containing nucleoside triphosphate hydrolases"/>
    <property type="match status" value="1"/>
</dbReference>
<dbReference type="PROSITE" id="PS01266">
    <property type="entry name" value="ADENYLOSUCCIN_SYN_1"/>
    <property type="match status" value="1"/>
</dbReference>
<dbReference type="PROSITE" id="PS00513">
    <property type="entry name" value="ADENYLOSUCCIN_SYN_2"/>
    <property type="match status" value="1"/>
</dbReference>
<proteinExistence type="inferred from homology"/>
<sequence length="415" mass="45775">MKADLVVGIQWGDEGKGKIVDSMASAYDVVVRYQGGHNAGHTIVVDGKKIALHLIPSGILYADCKNVIGNGVVVNPEALLKEMKQFEALEGRLFVSDKAHMILPYHEMLDQAREKLMEERAIGTTGKGIGPAYSDKISRNGIRMGELRDIPKLVEKIMEYQEAHAYLSDIYGVKLLGREEITERMSDYAKRLLPFIVDTTKLLWDAMDRGQRILLEGAQGSMLDIDHGTYPFVTSSTTTASGACSGTGLAPKHIGEVVGIAKAYCTRVGNGPFPTEDFGSEGNLLREKGKEFGTTTGRPRRCGWFDAIAVRHACRLNGCENLALMKLDVLDGFPEVKVCVAYLYEGKEIDYIPYDCEGVTPVYKSFAGWDHSEGIREFDALPKSAKEYVLEIEKITGARVSIISTGPDRKDTIRR</sequence>
<comment type="function">
    <text evidence="1">Plays an important role in the de novo pathway of purine nucleotide biosynthesis. Catalyzes the first committed step in the biosynthesis of AMP from IMP.</text>
</comment>
<comment type="catalytic activity">
    <reaction evidence="1">
        <text>IMP + L-aspartate + GTP = N(6)-(1,2-dicarboxyethyl)-AMP + GDP + phosphate + 2 H(+)</text>
        <dbReference type="Rhea" id="RHEA:15753"/>
        <dbReference type="ChEBI" id="CHEBI:15378"/>
        <dbReference type="ChEBI" id="CHEBI:29991"/>
        <dbReference type="ChEBI" id="CHEBI:37565"/>
        <dbReference type="ChEBI" id="CHEBI:43474"/>
        <dbReference type="ChEBI" id="CHEBI:57567"/>
        <dbReference type="ChEBI" id="CHEBI:58053"/>
        <dbReference type="ChEBI" id="CHEBI:58189"/>
        <dbReference type="EC" id="6.3.4.4"/>
    </reaction>
</comment>
<comment type="cofactor">
    <cofactor evidence="1">
        <name>Mg(2+)</name>
        <dbReference type="ChEBI" id="CHEBI:18420"/>
    </cofactor>
    <text evidence="1">Binds 1 Mg(2+) ion per subunit.</text>
</comment>
<comment type="pathway">
    <text evidence="1">Purine metabolism; AMP biosynthesis via de novo pathway; AMP from IMP: step 1/2.</text>
</comment>
<comment type="subunit">
    <text evidence="1">Homodimer.</text>
</comment>
<comment type="subcellular location">
    <subcellularLocation>
        <location evidence="1">Cytoplasm</location>
    </subcellularLocation>
</comment>
<comment type="similarity">
    <text evidence="1">Belongs to the adenylosuccinate synthetase family.</text>
</comment>
<reference key="1">
    <citation type="journal article" date="2003" name="Proc. Natl. Acad. Sci. U.S.A.">
        <title>Complete genome sequence and analysis of Wolinella succinogenes.</title>
        <authorList>
            <person name="Baar C."/>
            <person name="Eppinger M."/>
            <person name="Raddatz G."/>
            <person name="Simon J."/>
            <person name="Lanz C."/>
            <person name="Klimmek O."/>
            <person name="Nandakumar R."/>
            <person name="Gross R."/>
            <person name="Rosinus A."/>
            <person name="Keller H."/>
            <person name="Jagtap P."/>
            <person name="Linke B."/>
            <person name="Meyer F."/>
            <person name="Lederer H."/>
            <person name="Schuster S.C."/>
        </authorList>
    </citation>
    <scope>NUCLEOTIDE SEQUENCE [LARGE SCALE GENOMIC DNA]</scope>
    <source>
        <strain>ATCC 29543 / DSM 1740 / CCUG 13145 / JCM 31913 / LMG 7466 / NCTC 11488 / FDC 602W</strain>
    </source>
</reference>
<keyword id="KW-0963">Cytoplasm</keyword>
<keyword id="KW-0342">GTP-binding</keyword>
<keyword id="KW-0436">Ligase</keyword>
<keyword id="KW-0460">Magnesium</keyword>
<keyword id="KW-0479">Metal-binding</keyword>
<keyword id="KW-0547">Nucleotide-binding</keyword>
<keyword id="KW-0658">Purine biosynthesis</keyword>
<keyword id="KW-1185">Reference proteome</keyword>